<organism>
    <name type="scientific">Klebsiella pneumoniae subsp. pneumoniae (strain ATCC 700721 / MGH 78578)</name>
    <dbReference type="NCBI Taxonomy" id="272620"/>
    <lineage>
        <taxon>Bacteria</taxon>
        <taxon>Pseudomonadati</taxon>
        <taxon>Pseudomonadota</taxon>
        <taxon>Gammaproteobacteria</taxon>
        <taxon>Enterobacterales</taxon>
        <taxon>Enterobacteriaceae</taxon>
        <taxon>Klebsiella/Raoultella group</taxon>
        <taxon>Klebsiella</taxon>
        <taxon>Klebsiella pneumoniae complex</taxon>
    </lineage>
</organism>
<protein>
    <recommendedName>
        <fullName evidence="1">NAD-capped RNA hydrolase NudC</fullName>
        <shortName evidence="1">DeNADding enzyme NudC</shortName>
        <ecNumber evidence="1">3.6.1.-</ecNumber>
    </recommendedName>
    <alternativeName>
        <fullName evidence="1">NADH pyrophosphatase</fullName>
        <ecNumber evidence="1">3.6.1.22</ecNumber>
    </alternativeName>
</protein>
<gene>
    <name evidence="1" type="primary">nudC</name>
    <name type="ordered locus">KPN78578_43130</name>
    <name type="ORF">KPN_04378</name>
</gene>
<accession>A6TGQ3</accession>
<name>NUDC_KLEP7</name>
<dbReference type="EC" id="3.6.1.-" evidence="1"/>
<dbReference type="EC" id="3.6.1.22" evidence="1"/>
<dbReference type="EMBL" id="CP000647">
    <property type="protein sequence ID" value="ABR79737.1"/>
    <property type="molecule type" value="Genomic_DNA"/>
</dbReference>
<dbReference type="RefSeq" id="WP_002884327.1">
    <property type="nucleotide sequence ID" value="NC_009648.1"/>
</dbReference>
<dbReference type="SMR" id="A6TGQ3"/>
<dbReference type="STRING" id="272620.KPN_04378"/>
<dbReference type="jPOST" id="A6TGQ3"/>
<dbReference type="PaxDb" id="272620-KPN_04378"/>
<dbReference type="EnsemblBacteria" id="ABR79737">
    <property type="protein sequence ID" value="ABR79737"/>
    <property type="gene ID" value="KPN_04378"/>
</dbReference>
<dbReference type="KEGG" id="kpn:KPN_04378"/>
<dbReference type="HOGENOM" id="CLU_037162_0_1_6"/>
<dbReference type="Proteomes" id="UP000000265">
    <property type="component" value="Chromosome"/>
</dbReference>
<dbReference type="GO" id="GO:0005829">
    <property type="term" value="C:cytosol"/>
    <property type="evidence" value="ECO:0007669"/>
    <property type="project" value="TreeGrafter"/>
</dbReference>
<dbReference type="GO" id="GO:0000287">
    <property type="term" value="F:magnesium ion binding"/>
    <property type="evidence" value="ECO:0007669"/>
    <property type="project" value="UniProtKB-UniRule"/>
</dbReference>
<dbReference type="GO" id="GO:0030145">
    <property type="term" value="F:manganese ion binding"/>
    <property type="evidence" value="ECO:0007669"/>
    <property type="project" value="UniProtKB-UniRule"/>
</dbReference>
<dbReference type="GO" id="GO:0000210">
    <property type="term" value="F:NAD+ diphosphatase activity"/>
    <property type="evidence" value="ECO:0007669"/>
    <property type="project" value="UniProtKB-UniRule"/>
</dbReference>
<dbReference type="GO" id="GO:0035529">
    <property type="term" value="F:NADH pyrophosphatase activity"/>
    <property type="evidence" value="ECO:0007669"/>
    <property type="project" value="TreeGrafter"/>
</dbReference>
<dbReference type="GO" id="GO:0110153">
    <property type="term" value="F:RNA NAD-cap (NMN-forming) hydrolase activity"/>
    <property type="evidence" value="ECO:0007669"/>
    <property type="project" value="RHEA"/>
</dbReference>
<dbReference type="GO" id="GO:0008270">
    <property type="term" value="F:zinc ion binding"/>
    <property type="evidence" value="ECO:0007669"/>
    <property type="project" value="UniProtKB-UniRule"/>
</dbReference>
<dbReference type="GO" id="GO:0019677">
    <property type="term" value="P:NAD catabolic process"/>
    <property type="evidence" value="ECO:0007669"/>
    <property type="project" value="TreeGrafter"/>
</dbReference>
<dbReference type="GO" id="GO:0006734">
    <property type="term" value="P:NADH metabolic process"/>
    <property type="evidence" value="ECO:0007669"/>
    <property type="project" value="TreeGrafter"/>
</dbReference>
<dbReference type="GO" id="GO:0006742">
    <property type="term" value="P:NADP catabolic process"/>
    <property type="evidence" value="ECO:0007669"/>
    <property type="project" value="TreeGrafter"/>
</dbReference>
<dbReference type="CDD" id="cd03429">
    <property type="entry name" value="NUDIX_NADH_pyrophosphatase_Nudt13"/>
    <property type="match status" value="1"/>
</dbReference>
<dbReference type="FunFam" id="3.90.79.10:FF:000004">
    <property type="entry name" value="NADH pyrophosphatase"/>
    <property type="match status" value="1"/>
</dbReference>
<dbReference type="FunFam" id="3.90.79.20:FF:000001">
    <property type="entry name" value="NADH pyrophosphatase"/>
    <property type="match status" value="1"/>
</dbReference>
<dbReference type="Gene3D" id="3.90.79.20">
    <property type="match status" value="1"/>
</dbReference>
<dbReference type="Gene3D" id="3.90.79.10">
    <property type="entry name" value="Nucleoside Triphosphate Pyrophosphohydrolase"/>
    <property type="match status" value="1"/>
</dbReference>
<dbReference type="HAMAP" id="MF_00297">
    <property type="entry name" value="Nudix_NudC"/>
    <property type="match status" value="1"/>
</dbReference>
<dbReference type="InterPro" id="IPR050241">
    <property type="entry name" value="NAD-cap_RNA_hydrolase_NudC"/>
</dbReference>
<dbReference type="InterPro" id="IPR049734">
    <property type="entry name" value="NudC-like_C"/>
</dbReference>
<dbReference type="InterPro" id="IPR015797">
    <property type="entry name" value="NUDIX_hydrolase-like_dom_sf"/>
</dbReference>
<dbReference type="InterPro" id="IPR020084">
    <property type="entry name" value="NUDIX_hydrolase_CS"/>
</dbReference>
<dbReference type="InterPro" id="IPR000086">
    <property type="entry name" value="NUDIX_hydrolase_dom"/>
</dbReference>
<dbReference type="InterPro" id="IPR022925">
    <property type="entry name" value="RNA_Hydrolase_NudC"/>
</dbReference>
<dbReference type="InterPro" id="IPR015376">
    <property type="entry name" value="Znr_NADH_PPase"/>
</dbReference>
<dbReference type="NCBIfam" id="NF001299">
    <property type="entry name" value="PRK00241.1"/>
    <property type="match status" value="1"/>
</dbReference>
<dbReference type="PANTHER" id="PTHR42904:SF6">
    <property type="entry name" value="NAD-CAPPED RNA HYDROLASE NUDT12"/>
    <property type="match status" value="1"/>
</dbReference>
<dbReference type="PANTHER" id="PTHR42904">
    <property type="entry name" value="NUDIX HYDROLASE, NUDC SUBFAMILY"/>
    <property type="match status" value="1"/>
</dbReference>
<dbReference type="Pfam" id="PF00293">
    <property type="entry name" value="NUDIX"/>
    <property type="match status" value="1"/>
</dbReference>
<dbReference type="Pfam" id="PF09297">
    <property type="entry name" value="Zn_ribbon_NUD"/>
    <property type="match status" value="1"/>
</dbReference>
<dbReference type="SUPFAM" id="SSF55811">
    <property type="entry name" value="Nudix"/>
    <property type="match status" value="2"/>
</dbReference>
<dbReference type="PROSITE" id="PS51462">
    <property type="entry name" value="NUDIX"/>
    <property type="match status" value="1"/>
</dbReference>
<dbReference type="PROSITE" id="PS00893">
    <property type="entry name" value="NUDIX_BOX"/>
    <property type="match status" value="1"/>
</dbReference>
<sequence>MDRIIEKLDRGWWVVSHEQKLWLPGGELPHGEAVNFDLVGQHALHIGEWQGESVWMVRQDRRHDMGSLRQVLDQDPGLFQLAGRGIQLAEFYRSHKFCGYCGHPMHASKSEWAMLCSHCRERYYPQIAPCIIVAIRRDDAILLAQHTRHRNGVHTVLAGFVEVGETLEQAVAREVMEESGIRVKNLRYVTSQPWPFPQSLMTAFMADYADGEIVVDKKELLTADWYRYDDLPLLPPPGTVARRLIEDTVAMCRAEFE</sequence>
<evidence type="ECO:0000255" key="1">
    <source>
        <dbReference type="HAMAP-Rule" id="MF_00297"/>
    </source>
</evidence>
<reference key="1">
    <citation type="submission" date="2006-09" db="EMBL/GenBank/DDBJ databases">
        <authorList>
            <consortium name="The Klebsiella pneumonia Genome Sequencing Project"/>
            <person name="McClelland M."/>
            <person name="Sanderson E.K."/>
            <person name="Spieth J."/>
            <person name="Clifton W.S."/>
            <person name="Latreille P."/>
            <person name="Sabo A."/>
            <person name="Pepin K."/>
            <person name="Bhonagiri V."/>
            <person name="Porwollik S."/>
            <person name="Ali J."/>
            <person name="Wilson R.K."/>
        </authorList>
    </citation>
    <scope>NUCLEOTIDE SEQUENCE [LARGE SCALE GENOMIC DNA]</scope>
    <source>
        <strain>ATCC 700721 / MGH 78578</strain>
    </source>
</reference>
<keyword id="KW-0378">Hydrolase</keyword>
<keyword id="KW-0460">Magnesium</keyword>
<keyword id="KW-0464">Manganese</keyword>
<keyword id="KW-0479">Metal-binding</keyword>
<keyword id="KW-0520">NAD</keyword>
<keyword id="KW-0862">Zinc</keyword>
<feature type="chain" id="PRO_1000021908" description="NAD-capped RNA hydrolase NudC">
    <location>
        <begin position="1"/>
        <end position="257"/>
    </location>
</feature>
<feature type="domain" description="Nudix hydrolase" evidence="1">
    <location>
        <begin position="125"/>
        <end position="248"/>
    </location>
</feature>
<feature type="short sequence motif" description="Nudix box" evidence="1">
    <location>
        <begin position="159"/>
        <end position="180"/>
    </location>
</feature>
<feature type="binding site" evidence="1">
    <location>
        <position position="69"/>
    </location>
    <ligand>
        <name>substrate</name>
    </ligand>
</feature>
<feature type="binding site" evidence="1">
    <location>
        <position position="98"/>
    </location>
    <ligand>
        <name>Zn(2+)</name>
        <dbReference type="ChEBI" id="CHEBI:29105"/>
    </ligand>
</feature>
<feature type="binding site" evidence="1">
    <location>
        <position position="101"/>
    </location>
    <ligand>
        <name>Zn(2+)</name>
        <dbReference type="ChEBI" id="CHEBI:29105"/>
    </ligand>
</feature>
<feature type="binding site" evidence="1">
    <location>
        <position position="111"/>
    </location>
    <ligand>
        <name>substrate</name>
    </ligand>
</feature>
<feature type="binding site" evidence="1">
    <location>
        <position position="116"/>
    </location>
    <ligand>
        <name>Zn(2+)</name>
        <dbReference type="ChEBI" id="CHEBI:29105"/>
    </ligand>
</feature>
<feature type="binding site" evidence="1">
    <location>
        <position position="119"/>
    </location>
    <ligand>
        <name>Zn(2+)</name>
        <dbReference type="ChEBI" id="CHEBI:29105"/>
    </ligand>
</feature>
<feature type="binding site" evidence="1">
    <location>
        <position position="124"/>
    </location>
    <ligand>
        <name>substrate</name>
    </ligand>
</feature>
<feature type="binding site" evidence="1">
    <location>
        <position position="158"/>
    </location>
    <ligand>
        <name>a divalent metal cation</name>
        <dbReference type="ChEBI" id="CHEBI:60240"/>
        <label>1</label>
    </ligand>
</feature>
<feature type="binding site" evidence="1">
    <location>
        <position position="174"/>
    </location>
    <ligand>
        <name>a divalent metal cation</name>
        <dbReference type="ChEBI" id="CHEBI:60240"/>
        <label>2</label>
    </ligand>
</feature>
<feature type="binding site" evidence="1">
    <location>
        <position position="174"/>
    </location>
    <ligand>
        <name>a divalent metal cation</name>
        <dbReference type="ChEBI" id="CHEBI:60240"/>
        <label>3</label>
    </ligand>
</feature>
<feature type="binding site" evidence="1">
    <location>
        <position position="178"/>
    </location>
    <ligand>
        <name>a divalent metal cation</name>
        <dbReference type="ChEBI" id="CHEBI:60240"/>
        <label>1</label>
    </ligand>
</feature>
<feature type="binding site" evidence="1">
    <location>
        <position position="178"/>
    </location>
    <ligand>
        <name>a divalent metal cation</name>
        <dbReference type="ChEBI" id="CHEBI:60240"/>
        <label>3</label>
    </ligand>
</feature>
<feature type="binding site" evidence="1">
    <location>
        <begin position="192"/>
        <end position="199"/>
    </location>
    <ligand>
        <name>substrate</name>
    </ligand>
</feature>
<feature type="binding site" evidence="1">
    <location>
        <position position="219"/>
    </location>
    <ligand>
        <name>a divalent metal cation</name>
        <dbReference type="ChEBI" id="CHEBI:60240"/>
        <label>1</label>
    </ligand>
</feature>
<feature type="binding site" evidence="1">
    <location>
        <position position="219"/>
    </location>
    <ligand>
        <name>a divalent metal cation</name>
        <dbReference type="ChEBI" id="CHEBI:60240"/>
        <label>3</label>
    </ligand>
</feature>
<feature type="binding site" evidence="1">
    <location>
        <position position="241"/>
    </location>
    <ligand>
        <name>substrate</name>
    </ligand>
</feature>
<comment type="function">
    <text evidence="1">mRNA decapping enzyme that specifically removes the nicotinamide adenine dinucleotide (NAD) cap from a subset of mRNAs by hydrolyzing the diphosphate linkage to produce nicotinamide mononucleotide (NMN) and 5' monophosphate mRNA. The NAD-cap is present at the 5'-end of some mRNAs and stabilizes RNA against 5'-processing. Has preference for mRNAs with a 5'-end purine. Catalyzes the hydrolysis of a broad range of dinucleotide pyrophosphates.</text>
</comment>
<comment type="catalytic activity">
    <reaction evidence="1">
        <text>a 5'-end NAD(+)-phospho-ribonucleoside in mRNA + H2O = a 5'-end phospho-adenosine-phospho-ribonucleoside in mRNA + beta-nicotinamide D-ribonucleotide + 2 H(+)</text>
        <dbReference type="Rhea" id="RHEA:60876"/>
        <dbReference type="Rhea" id="RHEA-COMP:15698"/>
        <dbReference type="Rhea" id="RHEA-COMP:15719"/>
        <dbReference type="ChEBI" id="CHEBI:14649"/>
        <dbReference type="ChEBI" id="CHEBI:15377"/>
        <dbReference type="ChEBI" id="CHEBI:15378"/>
        <dbReference type="ChEBI" id="CHEBI:144029"/>
        <dbReference type="ChEBI" id="CHEBI:144051"/>
    </reaction>
    <physiologicalReaction direction="left-to-right" evidence="1">
        <dbReference type="Rhea" id="RHEA:60877"/>
    </physiologicalReaction>
</comment>
<comment type="catalytic activity">
    <reaction evidence="1">
        <text>NAD(+) + H2O = beta-nicotinamide D-ribonucleotide + AMP + 2 H(+)</text>
        <dbReference type="Rhea" id="RHEA:11800"/>
        <dbReference type="ChEBI" id="CHEBI:14649"/>
        <dbReference type="ChEBI" id="CHEBI:15377"/>
        <dbReference type="ChEBI" id="CHEBI:15378"/>
        <dbReference type="ChEBI" id="CHEBI:57540"/>
        <dbReference type="ChEBI" id="CHEBI:456215"/>
        <dbReference type="EC" id="3.6.1.22"/>
    </reaction>
</comment>
<comment type="catalytic activity">
    <reaction evidence="1">
        <text>NADH + H2O = reduced beta-nicotinamide D-ribonucleotide + AMP + 2 H(+)</text>
        <dbReference type="Rhea" id="RHEA:48868"/>
        <dbReference type="ChEBI" id="CHEBI:15377"/>
        <dbReference type="ChEBI" id="CHEBI:15378"/>
        <dbReference type="ChEBI" id="CHEBI:57945"/>
        <dbReference type="ChEBI" id="CHEBI:90832"/>
        <dbReference type="ChEBI" id="CHEBI:456215"/>
        <dbReference type="EC" id="3.6.1.22"/>
    </reaction>
</comment>
<comment type="cofactor">
    <cofactor evidence="1">
        <name>Mg(2+)</name>
        <dbReference type="ChEBI" id="CHEBI:18420"/>
    </cofactor>
    <cofactor evidence="1">
        <name>Mn(2+)</name>
        <dbReference type="ChEBI" id="CHEBI:29035"/>
    </cofactor>
    <text evidence="1">Divalent metal cations. Mg(2+) or Mn(2+).</text>
</comment>
<comment type="cofactor">
    <cofactor evidence="1">
        <name>Zn(2+)</name>
        <dbReference type="ChEBI" id="CHEBI:29105"/>
    </cofactor>
    <text evidence="1">Binds 1 zinc ion per subunit.</text>
</comment>
<comment type="subunit">
    <text evidence="1">Homodimer.</text>
</comment>
<comment type="similarity">
    <text evidence="1">Belongs to the Nudix hydrolase family. NudC subfamily.</text>
</comment>
<proteinExistence type="inferred from homology"/>